<dbReference type="EC" id="3.1.26.11" evidence="1"/>
<dbReference type="EMBL" id="AP009552">
    <property type="protein sequence ID" value="BAG05229.1"/>
    <property type="molecule type" value="Genomic_DNA"/>
</dbReference>
<dbReference type="RefSeq" id="WP_012267741.1">
    <property type="nucleotide sequence ID" value="NC_010296.1"/>
</dbReference>
<dbReference type="SMR" id="B0JGG3"/>
<dbReference type="STRING" id="449447.MAE_54070"/>
<dbReference type="PaxDb" id="449447-MAE_54070"/>
<dbReference type="EnsemblBacteria" id="BAG05229">
    <property type="protein sequence ID" value="BAG05229"/>
    <property type="gene ID" value="MAE_54070"/>
</dbReference>
<dbReference type="KEGG" id="mar:MAE_54070"/>
<dbReference type="PATRIC" id="fig|449447.4.peg.4928"/>
<dbReference type="eggNOG" id="COG1234">
    <property type="taxonomic scope" value="Bacteria"/>
</dbReference>
<dbReference type="HOGENOM" id="CLU_031317_2_0_3"/>
<dbReference type="BioCyc" id="MAER449447:MAE_RS23485-MONOMER"/>
<dbReference type="Proteomes" id="UP000001510">
    <property type="component" value="Chromosome"/>
</dbReference>
<dbReference type="GO" id="GO:0042781">
    <property type="term" value="F:3'-tRNA processing endoribonuclease activity"/>
    <property type="evidence" value="ECO:0007669"/>
    <property type="project" value="UniProtKB-UniRule"/>
</dbReference>
<dbReference type="GO" id="GO:0008270">
    <property type="term" value="F:zinc ion binding"/>
    <property type="evidence" value="ECO:0007669"/>
    <property type="project" value="UniProtKB-UniRule"/>
</dbReference>
<dbReference type="CDD" id="cd07717">
    <property type="entry name" value="RNaseZ_ZiPD-like_MBL-fold"/>
    <property type="match status" value="1"/>
</dbReference>
<dbReference type="FunFam" id="3.60.15.10:FF:000002">
    <property type="entry name" value="Ribonuclease Z"/>
    <property type="match status" value="1"/>
</dbReference>
<dbReference type="Gene3D" id="3.60.15.10">
    <property type="entry name" value="Ribonuclease Z/Hydroxyacylglutathione hydrolase-like"/>
    <property type="match status" value="1"/>
</dbReference>
<dbReference type="HAMAP" id="MF_01818">
    <property type="entry name" value="RNase_Z_BN"/>
    <property type="match status" value="1"/>
</dbReference>
<dbReference type="InterPro" id="IPR001279">
    <property type="entry name" value="Metallo-B-lactamas"/>
</dbReference>
<dbReference type="InterPro" id="IPR036866">
    <property type="entry name" value="RibonucZ/Hydroxyglut_hydro"/>
</dbReference>
<dbReference type="InterPro" id="IPR013471">
    <property type="entry name" value="RNase_Z/BN"/>
</dbReference>
<dbReference type="NCBIfam" id="NF000801">
    <property type="entry name" value="PRK00055.1-3"/>
    <property type="match status" value="1"/>
</dbReference>
<dbReference type="NCBIfam" id="TIGR02651">
    <property type="entry name" value="RNase_Z"/>
    <property type="match status" value="1"/>
</dbReference>
<dbReference type="PANTHER" id="PTHR46018">
    <property type="entry name" value="ZINC PHOSPHODIESTERASE ELAC PROTEIN 1"/>
    <property type="match status" value="1"/>
</dbReference>
<dbReference type="PANTHER" id="PTHR46018:SF2">
    <property type="entry name" value="ZINC PHOSPHODIESTERASE ELAC PROTEIN 1"/>
    <property type="match status" value="1"/>
</dbReference>
<dbReference type="Pfam" id="PF12706">
    <property type="entry name" value="Lactamase_B_2"/>
    <property type="match status" value="2"/>
</dbReference>
<dbReference type="SMART" id="SM00849">
    <property type="entry name" value="Lactamase_B"/>
    <property type="match status" value="1"/>
</dbReference>
<dbReference type="SUPFAM" id="SSF56281">
    <property type="entry name" value="Metallo-hydrolase/oxidoreductase"/>
    <property type="match status" value="1"/>
</dbReference>
<evidence type="ECO:0000255" key="1">
    <source>
        <dbReference type="HAMAP-Rule" id="MF_01818"/>
    </source>
</evidence>
<accession>B0JGG3</accession>
<keyword id="KW-0255">Endonuclease</keyword>
<keyword id="KW-0378">Hydrolase</keyword>
<keyword id="KW-0479">Metal-binding</keyword>
<keyword id="KW-0540">Nuclease</keyword>
<keyword id="KW-0819">tRNA processing</keyword>
<keyword id="KW-0862">Zinc</keyword>
<reference key="1">
    <citation type="journal article" date="2007" name="DNA Res.">
        <title>Complete genomic structure of the bloom-forming toxic cyanobacterium Microcystis aeruginosa NIES-843.</title>
        <authorList>
            <person name="Kaneko T."/>
            <person name="Nakajima N."/>
            <person name="Okamoto S."/>
            <person name="Suzuki I."/>
            <person name="Tanabe Y."/>
            <person name="Tamaoki M."/>
            <person name="Nakamura Y."/>
            <person name="Kasai F."/>
            <person name="Watanabe A."/>
            <person name="Kawashima K."/>
            <person name="Kishida Y."/>
            <person name="Ono A."/>
            <person name="Shimizu Y."/>
            <person name="Takahashi C."/>
            <person name="Minami C."/>
            <person name="Fujishiro T."/>
            <person name="Kohara M."/>
            <person name="Katoh M."/>
            <person name="Nakazaki N."/>
            <person name="Nakayama S."/>
            <person name="Yamada M."/>
            <person name="Tabata S."/>
            <person name="Watanabe M.M."/>
        </authorList>
    </citation>
    <scope>NUCLEOTIDE SEQUENCE [LARGE SCALE GENOMIC DNA]</scope>
    <source>
        <strain>NIES-843 / IAM M-247</strain>
    </source>
</reference>
<protein>
    <recommendedName>
        <fullName evidence="1">Ribonuclease Z</fullName>
        <shortName evidence="1">RNase Z</shortName>
        <ecNumber evidence="1">3.1.26.11</ecNumber>
    </recommendedName>
    <alternativeName>
        <fullName evidence="1">tRNA 3 endonuclease</fullName>
    </alternativeName>
    <alternativeName>
        <fullName evidence="1">tRNase Z</fullName>
    </alternativeName>
</protein>
<feature type="chain" id="PRO_1000088337" description="Ribonuclease Z">
    <location>
        <begin position="1"/>
        <end position="318"/>
    </location>
</feature>
<feature type="active site" description="Proton acceptor" evidence="1">
    <location>
        <position position="66"/>
    </location>
</feature>
<feature type="binding site" evidence="1">
    <location>
        <position position="62"/>
    </location>
    <ligand>
        <name>Zn(2+)</name>
        <dbReference type="ChEBI" id="CHEBI:29105"/>
        <label>1</label>
        <note>catalytic</note>
    </ligand>
</feature>
<feature type="binding site" evidence="1">
    <location>
        <position position="64"/>
    </location>
    <ligand>
        <name>Zn(2+)</name>
        <dbReference type="ChEBI" id="CHEBI:29105"/>
        <label>1</label>
        <note>catalytic</note>
    </ligand>
</feature>
<feature type="binding site" evidence="1">
    <location>
        <position position="66"/>
    </location>
    <ligand>
        <name>Zn(2+)</name>
        <dbReference type="ChEBI" id="CHEBI:29105"/>
        <label>2</label>
        <note>catalytic</note>
    </ligand>
</feature>
<feature type="binding site" evidence="1">
    <location>
        <position position="67"/>
    </location>
    <ligand>
        <name>Zn(2+)</name>
        <dbReference type="ChEBI" id="CHEBI:29105"/>
        <label>2</label>
        <note>catalytic</note>
    </ligand>
</feature>
<feature type="binding site" evidence="1">
    <location>
        <position position="139"/>
    </location>
    <ligand>
        <name>Zn(2+)</name>
        <dbReference type="ChEBI" id="CHEBI:29105"/>
        <label>1</label>
        <note>catalytic</note>
    </ligand>
</feature>
<feature type="binding site" evidence="1">
    <location>
        <position position="210"/>
    </location>
    <ligand>
        <name>Zn(2+)</name>
        <dbReference type="ChEBI" id="CHEBI:29105"/>
        <label>1</label>
        <note>catalytic</note>
    </ligand>
</feature>
<feature type="binding site" evidence="1">
    <location>
        <position position="210"/>
    </location>
    <ligand>
        <name>Zn(2+)</name>
        <dbReference type="ChEBI" id="CHEBI:29105"/>
        <label>2</label>
        <note>catalytic</note>
    </ligand>
</feature>
<feature type="binding site" evidence="1">
    <location>
        <position position="268"/>
    </location>
    <ligand>
        <name>Zn(2+)</name>
        <dbReference type="ChEBI" id="CHEBI:29105"/>
        <label>2</label>
        <note>catalytic</note>
    </ligand>
</feature>
<proteinExistence type="inferred from homology"/>
<name>RNZ_MICAN</name>
<gene>
    <name evidence="1" type="primary">rnz</name>
    <name type="ordered locus">MAE_54070</name>
</gene>
<comment type="function">
    <text evidence="1">Zinc phosphodiesterase, which displays some tRNA 3'-processing endonuclease activity. Probably involved in tRNA maturation, by removing a 3'-trailer from precursor tRNA.</text>
</comment>
<comment type="catalytic activity">
    <reaction evidence="1">
        <text>Endonucleolytic cleavage of RNA, removing extra 3' nucleotides from tRNA precursor, generating 3' termini of tRNAs. A 3'-hydroxy group is left at the tRNA terminus and a 5'-phosphoryl group is left at the trailer molecule.</text>
        <dbReference type="EC" id="3.1.26.11"/>
    </reaction>
</comment>
<comment type="cofactor">
    <cofactor evidence="1">
        <name>Zn(2+)</name>
        <dbReference type="ChEBI" id="CHEBI:29105"/>
    </cofactor>
    <text evidence="1">Binds 2 Zn(2+) ions.</text>
</comment>
<comment type="subunit">
    <text evidence="1">Homodimer.</text>
</comment>
<comment type="similarity">
    <text evidence="1">Belongs to the RNase Z family.</text>
</comment>
<sequence length="318" mass="34973">MEITFLGTSSGVPTRSRNVSSIALRLPQRAEIWLFDCGEGTQHQLLRSDLKSSQIRRIFITHMHGDHIFGLMGLLASIGLAGSAQDIDIYGPPGLGDYLRACAKYSYTNLANRVRVHAISPGILYEDEEFTVSCQLLKHRIPAHGYRIAEKDRPGRFDVEKANALGIPPGPIYGKLKKGETVTLPDGSKIRGQSLCGETEIGRKIAYCTDTIFCEGSIELAQNADVLIHEATFAHQDAGLAFESVHSTSTMAAQVALAAQVKLLLMTHFSPRYLPGNSLDISNLLEEARAIFPNTKLAYDFLTYEVPRNRQEMALGVK</sequence>
<organism>
    <name type="scientific">Microcystis aeruginosa (strain NIES-843 / IAM M-2473)</name>
    <dbReference type="NCBI Taxonomy" id="449447"/>
    <lineage>
        <taxon>Bacteria</taxon>
        <taxon>Bacillati</taxon>
        <taxon>Cyanobacteriota</taxon>
        <taxon>Cyanophyceae</taxon>
        <taxon>Oscillatoriophycideae</taxon>
        <taxon>Chroococcales</taxon>
        <taxon>Microcystaceae</taxon>
        <taxon>Microcystis</taxon>
    </lineage>
</organism>